<protein>
    <recommendedName>
        <fullName evidence="1">Ribosomal RNA large subunit methyltransferase H</fullName>
        <ecNumber evidence="1">2.1.1.177</ecNumber>
    </recommendedName>
    <alternativeName>
        <fullName evidence="1">23S rRNA (pseudouridine1915-N3)-methyltransferase</fullName>
    </alternativeName>
    <alternativeName>
        <fullName evidence="1">23S rRNA m3Psi1915 methyltransferase</fullName>
    </alternativeName>
    <alternativeName>
        <fullName evidence="1">rRNA (pseudouridine-N3-)-methyltransferase RlmH</fullName>
    </alternativeName>
</protein>
<feature type="chain" id="PRO_1000061815" description="Ribosomal RNA large subunit methyltransferase H">
    <location>
        <begin position="1"/>
        <end position="157"/>
    </location>
</feature>
<feature type="binding site" evidence="1">
    <location>
        <position position="73"/>
    </location>
    <ligand>
        <name>S-adenosyl-L-methionine</name>
        <dbReference type="ChEBI" id="CHEBI:59789"/>
    </ligand>
</feature>
<feature type="binding site" evidence="1">
    <location>
        <position position="105"/>
    </location>
    <ligand>
        <name>S-adenosyl-L-methionine</name>
        <dbReference type="ChEBI" id="CHEBI:59789"/>
    </ligand>
</feature>
<feature type="binding site" evidence="1">
    <location>
        <begin position="124"/>
        <end position="129"/>
    </location>
    <ligand>
        <name>S-adenosyl-L-methionine</name>
        <dbReference type="ChEBI" id="CHEBI:59789"/>
    </ligand>
</feature>
<comment type="function">
    <text evidence="1">Specifically methylates the pseudouridine at position 1915 (m3Psi1915) in 23S rRNA.</text>
</comment>
<comment type="catalytic activity">
    <reaction evidence="1">
        <text>pseudouridine(1915) in 23S rRNA + S-adenosyl-L-methionine = N(3)-methylpseudouridine(1915) in 23S rRNA + S-adenosyl-L-homocysteine + H(+)</text>
        <dbReference type="Rhea" id="RHEA:42752"/>
        <dbReference type="Rhea" id="RHEA-COMP:10221"/>
        <dbReference type="Rhea" id="RHEA-COMP:10222"/>
        <dbReference type="ChEBI" id="CHEBI:15378"/>
        <dbReference type="ChEBI" id="CHEBI:57856"/>
        <dbReference type="ChEBI" id="CHEBI:59789"/>
        <dbReference type="ChEBI" id="CHEBI:65314"/>
        <dbReference type="ChEBI" id="CHEBI:74486"/>
        <dbReference type="EC" id="2.1.1.177"/>
    </reaction>
</comment>
<comment type="subunit">
    <text evidence="1">Homodimer.</text>
</comment>
<comment type="subcellular location">
    <subcellularLocation>
        <location evidence="1">Cytoplasm</location>
    </subcellularLocation>
</comment>
<comment type="similarity">
    <text evidence="1">Belongs to the RNA methyltransferase RlmH family.</text>
</comment>
<sequence length="157" mass="18152">MKIGLIVIGKTDAGYFVEAINEYKNRLTHYIPFEMEVIPDIKNVKNLSEAQQKEKEGELILKALQPGDYLVLLDEKGKEFTSMQFSTYLEKKMHTVPKRLVFVVGGPYGFSEAVYKAASEKISLSKMTFSHQMIRLIFIEQIYRAMTILNNEPYHHE</sequence>
<dbReference type="EC" id="2.1.1.177" evidence="1"/>
<dbReference type="EMBL" id="CP000140">
    <property type="protein sequence ID" value="ABR43815.1"/>
    <property type="molecule type" value="Genomic_DNA"/>
</dbReference>
<dbReference type="RefSeq" id="WP_005854430.1">
    <property type="nucleotide sequence ID" value="NZ_LR215978.1"/>
</dbReference>
<dbReference type="SMR" id="A6LDQ1"/>
<dbReference type="STRING" id="435591.BDI_2084"/>
<dbReference type="PaxDb" id="435591-BDI_2084"/>
<dbReference type="KEGG" id="pdi:BDI_2084"/>
<dbReference type="eggNOG" id="COG1576">
    <property type="taxonomic scope" value="Bacteria"/>
</dbReference>
<dbReference type="HOGENOM" id="CLU_100552_2_0_10"/>
<dbReference type="BioCyc" id="PDIS435591:G1G5A-2138-MONOMER"/>
<dbReference type="Proteomes" id="UP000000566">
    <property type="component" value="Chromosome"/>
</dbReference>
<dbReference type="GO" id="GO:0005737">
    <property type="term" value="C:cytoplasm"/>
    <property type="evidence" value="ECO:0007669"/>
    <property type="project" value="UniProtKB-SubCell"/>
</dbReference>
<dbReference type="GO" id="GO:0070038">
    <property type="term" value="F:rRNA (pseudouridine-N3-)-methyltransferase activity"/>
    <property type="evidence" value="ECO:0007669"/>
    <property type="project" value="UniProtKB-UniRule"/>
</dbReference>
<dbReference type="CDD" id="cd18081">
    <property type="entry name" value="RlmH-like"/>
    <property type="match status" value="1"/>
</dbReference>
<dbReference type="Gene3D" id="3.40.1280.10">
    <property type="match status" value="1"/>
</dbReference>
<dbReference type="HAMAP" id="MF_00658">
    <property type="entry name" value="23SrRNA_methyltr_H"/>
    <property type="match status" value="1"/>
</dbReference>
<dbReference type="InterPro" id="IPR029028">
    <property type="entry name" value="Alpha/beta_knot_MTases"/>
</dbReference>
<dbReference type="InterPro" id="IPR003742">
    <property type="entry name" value="RlmH-like"/>
</dbReference>
<dbReference type="InterPro" id="IPR029026">
    <property type="entry name" value="tRNA_m1G_MTases_N"/>
</dbReference>
<dbReference type="NCBIfam" id="NF000990">
    <property type="entry name" value="PRK00103.2-4"/>
    <property type="match status" value="1"/>
</dbReference>
<dbReference type="PANTHER" id="PTHR33603">
    <property type="entry name" value="METHYLTRANSFERASE"/>
    <property type="match status" value="1"/>
</dbReference>
<dbReference type="PANTHER" id="PTHR33603:SF1">
    <property type="entry name" value="RIBOSOMAL RNA LARGE SUBUNIT METHYLTRANSFERASE H"/>
    <property type="match status" value="1"/>
</dbReference>
<dbReference type="Pfam" id="PF02590">
    <property type="entry name" value="SPOUT_MTase"/>
    <property type="match status" value="1"/>
</dbReference>
<dbReference type="PIRSF" id="PIRSF004505">
    <property type="entry name" value="MT_bac"/>
    <property type="match status" value="1"/>
</dbReference>
<dbReference type="SUPFAM" id="SSF75217">
    <property type="entry name" value="alpha/beta knot"/>
    <property type="match status" value="1"/>
</dbReference>
<proteinExistence type="inferred from homology"/>
<accession>A6LDQ1</accession>
<keyword id="KW-0963">Cytoplasm</keyword>
<keyword id="KW-0489">Methyltransferase</keyword>
<keyword id="KW-1185">Reference proteome</keyword>
<keyword id="KW-0698">rRNA processing</keyword>
<keyword id="KW-0949">S-adenosyl-L-methionine</keyword>
<keyword id="KW-0808">Transferase</keyword>
<organism>
    <name type="scientific">Parabacteroides distasonis (strain ATCC 8503 / DSM 20701 / CIP 104284 / JCM 5825 / NCTC 11152)</name>
    <dbReference type="NCBI Taxonomy" id="435591"/>
    <lineage>
        <taxon>Bacteria</taxon>
        <taxon>Pseudomonadati</taxon>
        <taxon>Bacteroidota</taxon>
        <taxon>Bacteroidia</taxon>
        <taxon>Bacteroidales</taxon>
        <taxon>Tannerellaceae</taxon>
        <taxon>Parabacteroides</taxon>
    </lineage>
</organism>
<reference key="1">
    <citation type="journal article" date="2007" name="PLoS Biol.">
        <title>Evolution of symbiotic bacteria in the distal human intestine.</title>
        <authorList>
            <person name="Xu J."/>
            <person name="Mahowald M.A."/>
            <person name="Ley R.E."/>
            <person name="Lozupone C.A."/>
            <person name="Hamady M."/>
            <person name="Martens E.C."/>
            <person name="Henrissat B."/>
            <person name="Coutinho P.M."/>
            <person name="Minx P."/>
            <person name="Latreille P."/>
            <person name="Cordum H."/>
            <person name="Van Brunt A."/>
            <person name="Kim K."/>
            <person name="Fulton R.S."/>
            <person name="Fulton L.A."/>
            <person name="Clifton S.W."/>
            <person name="Wilson R.K."/>
            <person name="Knight R.D."/>
            <person name="Gordon J.I."/>
        </authorList>
    </citation>
    <scope>NUCLEOTIDE SEQUENCE [LARGE SCALE GENOMIC DNA]</scope>
    <source>
        <strain>ATCC 8503 / DSM 20701 / CIP 104284 / JCM 5825 / NCTC 11152</strain>
    </source>
</reference>
<evidence type="ECO:0000255" key="1">
    <source>
        <dbReference type="HAMAP-Rule" id="MF_00658"/>
    </source>
</evidence>
<gene>
    <name evidence="1" type="primary">rlmH</name>
    <name type="ordered locus">BDI_2084</name>
</gene>
<name>RLMH_PARD8</name>